<feature type="chain" id="PRO_0000058804" description="Serine/threonine-protein phosphatase PP1 isozyme 8">
    <location>
        <begin position="1"/>
        <end position="324"/>
    </location>
</feature>
<feature type="active site" description="Proton donor" evidence="1">
    <location>
        <position position="127"/>
    </location>
</feature>
<feature type="binding site" evidence="1">
    <location>
        <position position="66"/>
    </location>
    <ligand>
        <name>Mn(2+)</name>
        <dbReference type="ChEBI" id="CHEBI:29035"/>
        <label>1</label>
    </ligand>
</feature>
<feature type="binding site" evidence="1">
    <location>
        <position position="68"/>
    </location>
    <ligand>
        <name>Mn(2+)</name>
        <dbReference type="ChEBI" id="CHEBI:29035"/>
        <label>1</label>
    </ligand>
</feature>
<feature type="binding site" evidence="1">
    <location>
        <position position="94"/>
    </location>
    <ligand>
        <name>Mn(2+)</name>
        <dbReference type="ChEBI" id="CHEBI:29035"/>
        <label>1</label>
    </ligand>
</feature>
<feature type="binding site" evidence="1">
    <location>
        <position position="94"/>
    </location>
    <ligand>
        <name>Mn(2+)</name>
        <dbReference type="ChEBI" id="CHEBI:29035"/>
        <label>2</label>
    </ligand>
</feature>
<feature type="binding site" evidence="1">
    <location>
        <position position="126"/>
    </location>
    <ligand>
        <name>Mn(2+)</name>
        <dbReference type="ChEBI" id="CHEBI:29035"/>
        <label>2</label>
    </ligand>
</feature>
<feature type="binding site" evidence="1">
    <location>
        <position position="175"/>
    </location>
    <ligand>
        <name>Mn(2+)</name>
        <dbReference type="ChEBI" id="CHEBI:29035"/>
        <label>2</label>
    </ligand>
</feature>
<feature type="binding site" evidence="1">
    <location>
        <position position="250"/>
    </location>
    <ligand>
        <name>Mn(2+)</name>
        <dbReference type="ChEBI" id="CHEBI:29035"/>
        <label>2</label>
    </ligand>
</feature>
<feature type="splice variant" id="VSP_009007" description="In isoform 2." evidence="4">
    <original>DFHNRTLGYNLSA</original>
    <variation>VPKMGKS</variation>
    <location>
        <begin position="312"/>
        <end position="324"/>
    </location>
</feature>
<feature type="sequence conflict" description="In Ref. 1; AAC39461." evidence="6" ref="1">
    <original>G</original>
    <variation>E</variation>
    <location>
        <position position="256"/>
    </location>
</feature>
<gene>
    <name evidence="5" type="primary">TOPP8</name>
    <name evidence="7" type="ordered locus">At5g27840</name>
    <name type="ORF">T1G16.170</name>
</gene>
<sequence>MMTSMEGMVEKGVLDDIIRRLLEGKGGKQVQLSESEIRQLCFNARQIFLSQPNLLDLHAPIRICGDIHGQYQDLLRLFEYGGYPPSANYLFLGDYVDRGKQSLETICLLLAYKIRYPSKIYLLRGNHEDAKINRIYGFYDECKRRFNVRLWKVFTDCFNCLPVAALIDEKILCMHGGLSPDLDNLNQIREIQRPIEIPDSGLLCDLLWSDPDQKIEGWADSDRGISCTFGADKVAEFLDKNDLDLICRGHQVVEDGYEFFAKRRLVTIFSAPNYGGEFDNAGALLSVDESLVCSFEIMKPAPASSSHPLKKDFHNRTLGYNLSA</sequence>
<dbReference type="EC" id="3.1.3.16" evidence="3"/>
<dbReference type="EMBL" id="U80922">
    <property type="protein sequence ID" value="AAC39461.1"/>
    <property type="molecule type" value="Genomic_DNA"/>
</dbReference>
<dbReference type="EMBL" id="AC069556">
    <property type="status" value="NOT_ANNOTATED_CDS"/>
    <property type="molecule type" value="Genomic_DNA"/>
</dbReference>
<dbReference type="EMBL" id="CP002688">
    <property type="protein sequence ID" value="AED93734.1"/>
    <property type="molecule type" value="Genomic_DNA"/>
</dbReference>
<dbReference type="EMBL" id="CP002688">
    <property type="protein sequence ID" value="AED93735.1"/>
    <property type="molecule type" value="Genomic_DNA"/>
</dbReference>
<dbReference type="EMBL" id="CP002688">
    <property type="protein sequence ID" value="ANM69190.1"/>
    <property type="molecule type" value="Genomic_DNA"/>
</dbReference>
<dbReference type="EMBL" id="AY081492">
    <property type="protein sequence ID" value="AAM10054.1"/>
    <property type="molecule type" value="mRNA"/>
</dbReference>
<dbReference type="EMBL" id="AY042854">
    <property type="protein sequence ID" value="AAK68794.1"/>
    <property type="molecule type" value="mRNA"/>
</dbReference>
<dbReference type="EMBL" id="AY087823">
    <property type="protein sequence ID" value="AAM65377.1"/>
    <property type="status" value="ALT_INIT"/>
    <property type="molecule type" value="mRNA"/>
</dbReference>
<dbReference type="RefSeq" id="NP_001330890.1">
    <molecule id="O82734-1"/>
    <property type="nucleotide sequence ID" value="NM_001344042.1"/>
</dbReference>
<dbReference type="RefSeq" id="NP_568501.3">
    <molecule id="O82734-1"/>
    <property type="nucleotide sequence ID" value="NM_122666.4"/>
</dbReference>
<dbReference type="RefSeq" id="NP_851085.1">
    <molecule id="O82734-2"/>
    <property type="nucleotide sequence ID" value="NM_180754.4"/>
</dbReference>
<dbReference type="SMR" id="O82734"/>
<dbReference type="BioGRID" id="18120">
    <property type="interactions" value="6"/>
</dbReference>
<dbReference type="FunCoup" id="O82734">
    <property type="interactions" value="94"/>
</dbReference>
<dbReference type="IntAct" id="O82734">
    <property type="interactions" value="2"/>
</dbReference>
<dbReference type="MINT" id="O82734"/>
<dbReference type="STRING" id="3702.O82734"/>
<dbReference type="PaxDb" id="3702-AT5G27840.2"/>
<dbReference type="ProteomicsDB" id="249152">
    <molecule id="O82734-1"/>
</dbReference>
<dbReference type="EnsemblPlants" id="AT5G27840.1">
    <molecule id="O82734-2"/>
    <property type="protein sequence ID" value="AT5G27840.1"/>
    <property type="gene ID" value="AT5G27840"/>
</dbReference>
<dbReference type="EnsemblPlants" id="AT5G27840.2">
    <molecule id="O82734-1"/>
    <property type="protein sequence ID" value="AT5G27840.2"/>
    <property type="gene ID" value="AT5G27840"/>
</dbReference>
<dbReference type="EnsemblPlants" id="AT5G27840.3">
    <molecule id="O82734-1"/>
    <property type="protein sequence ID" value="AT5G27840.3"/>
    <property type="gene ID" value="AT5G27840"/>
</dbReference>
<dbReference type="GeneID" id="832846"/>
<dbReference type="Gramene" id="AT5G27840.1">
    <molecule id="O82734-2"/>
    <property type="protein sequence ID" value="AT5G27840.1"/>
    <property type="gene ID" value="AT5G27840"/>
</dbReference>
<dbReference type="Gramene" id="AT5G27840.2">
    <molecule id="O82734-1"/>
    <property type="protein sequence ID" value="AT5G27840.2"/>
    <property type="gene ID" value="AT5G27840"/>
</dbReference>
<dbReference type="Gramene" id="AT5G27840.3">
    <molecule id="O82734-1"/>
    <property type="protein sequence ID" value="AT5G27840.3"/>
    <property type="gene ID" value="AT5G27840"/>
</dbReference>
<dbReference type="KEGG" id="ath:AT5G27840"/>
<dbReference type="Araport" id="AT5G27840"/>
<dbReference type="TAIR" id="AT5G27840">
    <property type="gene designation" value="TOPP8"/>
</dbReference>
<dbReference type="eggNOG" id="KOG0374">
    <property type="taxonomic scope" value="Eukaryota"/>
</dbReference>
<dbReference type="InParanoid" id="O82734"/>
<dbReference type="OMA" id="VMEGMME"/>
<dbReference type="OrthoDB" id="1930084at2759"/>
<dbReference type="PhylomeDB" id="O82734"/>
<dbReference type="PRO" id="PR:O82734"/>
<dbReference type="Proteomes" id="UP000006548">
    <property type="component" value="Chromosome 5"/>
</dbReference>
<dbReference type="ExpressionAtlas" id="O82734">
    <property type="expression patterns" value="baseline and differential"/>
</dbReference>
<dbReference type="GO" id="GO:0005829">
    <property type="term" value="C:cytosol"/>
    <property type="evidence" value="ECO:0000314"/>
    <property type="project" value="TAIR"/>
</dbReference>
<dbReference type="GO" id="GO:0005634">
    <property type="term" value="C:nucleus"/>
    <property type="evidence" value="ECO:0000314"/>
    <property type="project" value="TAIR"/>
</dbReference>
<dbReference type="GO" id="GO:0046872">
    <property type="term" value="F:metal ion binding"/>
    <property type="evidence" value="ECO:0007669"/>
    <property type="project" value="UniProtKB-KW"/>
</dbReference>
<dbReference type="GO" id="GO:0004722">
    <property type="term" value="F:protein serine/threonine phosphatase activity"/>
    <property type="evidence" value="ECO:0000314"/>
    <property type="project" value="TAIR"/>
</dbReference>
<dbReference type="GO" id="GO:0009860">
    <property type="term" value="P:pollen tube growth"/>
    <property type="evidence" value="ECO:0000316"/>
    <property type="project" value="TAIR"/>
</dbReference>
<dbReference type="GO" id="GO:0048768">
    <property type="term" value="P:root hair cell tip growth"/>
    <property type="evidence" value="ECO:0000316"/>
    <property type="project" value="TAIR"/>
</dbReference>
<dbReference type="CDD" id="cd07414">
    <property type="entry name" value="MPP_PP1_PPKL"/>
    <property type="match status" value="1"/>
</dbReference>
<dbReference type="FunFam" id="3.60.21.10:FF:000026">
    <property type="entry name" value="Serine/threonine-protein phosphatase"/>
    <property type="match status" value="1"/>
</dbReference>
<dbReference type="Gene3D" id="3.60.21.10">
    <property type="match status" value="1"/>
</dbReference>
<dbReference type="InterPro" id="IPR004843">
    <property type="entry name" value="Calcineurin-like_PHP_ApaH"/>
</dbReference>
<dbReference type="InterPro" id="IPR029052">
    <property type="entry name" value="Metallo-depent_PP-like"/>
</dbReference>
<dbReference type="InterPro" id="IPR050341">
    <property type="entry name" value="PP1_catalytic_subunit"/>
</dbReference>
<dbReference type="InterPro" id="IPR006186">
    <property type="entry name" value="Ser/Thr-sp_prot-phosphatase"/>
</dbReference>
<dbReference type="InterPro" id="IPR031675">
    <property type="entry name" value="STPPase_N"/>
</dbReference>
<dbReference type="PANTHER" id="PTHR11668">
    <property type="entry name" value="SERINE/THREONINE PROTEIN PHOSPHATASE"/>
    <property type="match status" value="1"/>
</dbReference>
<dbReference type="PANTHER" id="PTHR11668:SF432">
    <property type="entry name" value="SERINE_THREONINE-PROTEIN PHOSPHATASE PP1 ISOZYME 8"/>
    <property type="match status" value="1"/>
</dbReference>
<dbReference type="Pfam" id="PF00149">
    <property type="entry name" value="Metallophos"/>
    <property type="match status" value="1"/>
</dbReference>
<dbReference type="Pfam" id="PF16891">
    <property type="entry name" value="STPPase_N"/>
    <property type="match status" value="1"/>
</dbReference>
<dbReference type="PRINTS" id="PR00114">
    <property type="entry name" value="STPHPHTASE"/>
</dbReference>
<dbReference type="SMART" id="SM00156">
    <property type="entry name" value="PP2Ac"/>
    <property type="match status" value="1"/>
</dbReference>
<dbReference type="SUPFAM" id="SSF56300">
    <property type="entry name" value="Metallo-dependent phosphatases"/>
    <property type="match status" value="1"/>
</dbReference>
<dbReference type="PROSITE" id="PS00125">
    <property type="entry name" value="SER_THR_PHOSPHATASE"/>
    <property type="match status" value="1"/>
</dbReference>
<evidence type="ECO:0000250" key="1"/>
<evidence type="ECO:0000269" key="2">
    <source>
    </source>
</evidence>
<evidence type="ECO:0000269" key="3">
    <source>
    </source>
</evidence>
<evidence type="ECO:0000303" key="4">
    <source>
    </source>
</evidence>
<evidence type="ECO:0000303" key="5">
    <source>
    </source>
</evidence>
<evidence type="ECO:0000305" key="6"/>
<evidence type="ECO:0000312" key="7">
    <source>
        <dbReference type="Araport" id="AT5G27840"/>
    </source>
</evidence>
<proteinExistence type="evidence at protein level"/>
<protein>
    <recommendedName>
        <fullName evidence="6">Serine/threonine-protein phosphatase PP1 isozyme 8</fullName>
        <ecNumber evidence="3">3.1.3.16</ecNumber>
    </recommendedName>
    <alternativeName>
        <fullName evidence="5">Type one protein phosphatase 8</fullName>
    </alternativeName>
</protein>
<name>PP18_ARATH</name>
<reference key="1">
    <citation type="journal article" date="1998" name="Plant Mol. Biol.">
        <title>Molecular cloning and chromosomal mapping of type one serine/threonine protein phosphatases in Arabidopsis thaliana.</title>
        <authorList>
            <person name="Lin Q."/>
            <person name="Li J."/>
            <person name="Smith R.D."/>
            <person name="Walker J.C."/>
        </authorList>
    </citation>
    <scope>NUCLEOTIDE SEQUENCE [GENOMIC DNA] (ISOFORM 2)</scope>
</reference>
<reference key="2">
    <citation type="journal article" date="2000" name="Nature">
        <title>Sequence and analysis of chromosome 5 of the plant Arabidopsis thaliana.</title>
        <authorList>
            <person name="Tabata S."/>
            <person name="Kaneko T."/>
            <person name="Nakamura Y."/>
            <person name="Kotani H."/>
            <person name="Kato T."/>
            <person name="Asamizu E."/>
            <person name="Miyajima N."/>
            <person name="Sasamoto S."/>
            <person name="Kimura T."/>
            <person name="Hosouchi T."/>
            <person name="Kawashima K."/>
            <person name="Kohara M."/>
            <person name="Matsumoto M."/>
            <person name="Matsuno A."/>
            <person name="Muraki A."/>
            <person name="Nakayama S."/>
            <person name="Nakazaki N."/>
            <person name="Naruo K."/>
            <person name="Okumura S."/>
            <person name="Shinpo S."/>
            <person name="Takeuchi C."/>
            <person name="Wada T."/>
            <person name="Watanabe A."/>
            <person name="Yamada M."/>
            <person name="Yasuda M."/>
            <person name="Sato S."/>
            <person name="de la Bastide M."/>
            <person name="Huang E."/>
            <person name="Spiegel L."/>
            <person name="Gnoj L."/>
            <person name="O'Shaughnessy A."/>
            <person name="Preston R."/>
            <person name="Habermann K."/>
            <person name="Murray J."/>
            <person name="Johnson D."/>
            <person name="Rohlfing T."/>
            <person name="Nelson J."/>
            <person name="Stoneking T."/>
            <person name="Pepin K."/>
            <person name="Spieth J."/>
            <person name="Sekhon M."/>
            <person name="Armstrong J."/>
            <person name="Becker M."/>
            <person name="Belter E."/>
            <person name="Cordum H."/>
            <person name="Cordes M."/>
            <person name="Courtney L."/>
            <person name="Courtney W."/>
            <person name="Dante M."/>
            <person name="Du H."/>
            <person name="Edwards J."/>
            <person name="Fryman J."/>
            <person name="Haakensen B."/>
            <person name="Lamar E."/>
            <person name="Latreille P."/>
            <person name="Leonard S."/>
            <person name="Meyer R."/>
            <person name="Mulvaney E."/>
            <person name="Ozersky P."/>
            <person name="Riley A."/>
            <person name="Strowmatt C."/>
            <person name="Wagner-McPherson C."/>
            <person name="Wollam A."/>
            <person name="Yoakum M."/>
            <person name="Bell M."/>
            <person name="Dedhia N."/>
            <person name="Parnell L."/>
            <person name="Shah R."/>
            <person name="Rodriguez M."/>
            <person name="Hoon See L."/>
            <person name="Vil D."/>
            <person name="Baker J."/>
            <person name="Kirchoff K."/>
            <person name="Toth K."/>
            <person name="King L."/>
            <person name="Bahret A."/>
            <person name="Miller B."/>
            <person name="Marra M.A."/>
            <person name="Martienssen R."/>
            <person name="McCombie W.R."/>
            <person name="Wilson R.K."/>
            <person name="Murphy G."/>
            <person name="Bancroft I."/>
            <person name="Volckaert G."/>
            <person name="Wambutt R."/>
            <person name="Duesterhoeft A."/>
            <person name="Stiekema W."/>
            <person name="Pohl T."/>
            <person name="Entian K.-D."/>
            <person name="Terryn N."/>
            <person name="Hartley N."/>
            <person name="Bent E."/>
            <person name="Johnson S."/>
            <person name="Langham S.-A."/>
            <person name="McCullagh B."/>
            <person name="Robben J."/>
            <person name="Grymonprez B."/>
            <person name="Zimmermann W."/>
            <person name="Ramsperger U."/>
            <person name="Wedler H."/>
            <person name="Balke K."/>
            <person name="Wedler E."/>
            <person name="Peters S."/>
            <person name="van Staveren M."/>
            <person name="Dirkse W."/>
            <person name="Mooijman P."/>
            <person name="Klein Lankhorst R."/>
            <person name="Weitzenegger T."/>
            <person name="Bothe G."/>
            <person name="Rose M."/>
            <person name="Hauf J."/>
            <person name="Berneiser S."/>
            <person name="Hempel S."/>
            <person name="Feldpausch M."/>
            <person name="Lamberth S."/>
            <person name="Villarroel R."/>
            <person name="Gielen J."/>
            <person name="Ardiles W."/>
            <person name="Bents O."/>
            <person name="Lemcke K."/>
            <person name="Kolesov G."/>
            <person name="Mayer K.F.X."/>
            <person name="Rudd S."/>
            <person name="Schoof H."/>
            <person name="Schueller C."/>
            <person name="Zaccaria P."/>
            <person name="Mewes H.-W."/>
            <person name="Bevan M."/>
            <person name="Fransz P.F."/>
        </authorList>
    </citation>
    <scope>NUCLEOTIDE SEQUENCE [LARGE SCALE GENOMIC DNA]</scope>
    <source>
        <strain>cv. Columbia</strain>
    </source>
</reference>
<reference key="3">
    <citation type="journal article" date="2017" name="Plant J.">
        <title>Araport11: a complete reannotation of the Arabidopsis thaliana reference genome.</title>
        <authorList>
            <person name="Cheng C.Y."/>
            <person name="Krishnakumar V."/>
            <person name="Chan A.P."/>
            <person name="Thibaud-Nissen F."/>
            <person name="Schobel S."/>
            <person name="Town C.D."/>
        </authorList>
    </citation>
    <scope>GENOME REANNOTATION</scope>
    <source>
        <strain>cv. Columbia</strain>
    </source>
</reference>
<reference key="4">
    <citation type="journal article" date="2003" name="Science">
        <title>Empirical analysis of transcriptional activity in the Arabidopsis genome.</title>
        <authorList>
            <person name="Yamada K."/>
            <person name="Lim J."/>
            <person name="Dale J.M."/>
            <person name="Chen H."/>
            <person name="Shinn P."/>
            <person name="Palm C.J."/>
            <person name="Southwick A.M."/>
            <person name="Wu H.C."/>
            <person name="Kim C.J."/>
            <person name="Nguyen M."/>
            <person name="Pham P.K."/>
            <person name="Cheuk R.F."/>
            <person name="Karlin-Newmann G."/>
            <person name="Liu S.X."/>
            <person name="Lam B."/>
            <person name="Sakano H."/>
            <person name="Wu T."/>
            <person name="Yu G."/>
            <person name="Miranda M."/>
            <person name="Quach H.L."/>
            <person name="Tripp M."/>
            <person name="Chang C.H."/>
            <person name="Lee J.M."/>
            <person name="Toriumi M.J."/>
            <person name="Chan M.M."/>
            <person name="Tang C.C."/>
            <person name="Onodera C.S."/>
            <person name="Deng J.M."/>
            <person name="Akiyama K."/>
            <person name="Ansari Y."/>
            <person name="Arakawa T."/>
            <person name="Banh J."/>
            <person name="Banno F."/>
            <person name="Bowser L."/>
            <person name="Brooks S.Y."/>
            <person name="Carninci P."/>
            <person name="Chao Q."/>
            <person name="Choy N."/>
            <person name="Enju A."/>
            <person name="Goldsmith A.D."/>
            <person name="Gurjal M."/>
            <person name="Hansen N.F."/>
            <person name="Hayashizaki Y."/>
            <person name="Johnson-Hopson C."/>
            <person name="Hsuan V.W."/>
            <person name="Iida K."/>
            <person name="Karnes M."/>
            <person name="Khan S."/>
            <person name="Koesema E."/>
            <person name="Ishida J."/>
            <person name="Jiang P.X."/>
            <person name="Jones T."/>
            <person name="Kawai J."/>
            <person name="Kamiya A."/>
            <person name="Meyers C."/>
            <person name="Nakajima M."/>
            <person name="Narusaka M."/>
            <person name="Seki M."/>
            <person name="Sakurai T."/>
            <person name="Satou M."/>
            <person name="Tamse R."/>
            <person name="Vaysberg M."/>
            <person name="Wallender E.K."/>
            <person name="Wong C."/>
            <person name="Yamamura Y."/>
            <person name="Yuan S."/>
            <person name="Shinozaki K."/>
            <person name="Davis R.W."/>
            <person name="Theologis A."/>
            <person name="Ecker J.R."/>
        </authorList>
    </citation>
    <scope>NUCLEOTIDE SEQUENCE [LARGE SCALE MRNA] (ISOFORM 2)</scope>
    <source>
        <strain>cv. Columbia</strain>
    </source>
</reference>
<reference key="5">
    <citation type="submission" date="2002-03" db="EMBL/GenBank/DDBJ databases">
        <title>Full-length cDNA from Arabidopsis thaliana.</title>
        <authorList>
            <person name="Brover V.V."/>
            <person name="Troukhan M.E."/>
            <person name="Alexandrov N.A."/>
            <person name="Lu Y.-P."/>
            <person name="Flavell R.B."/>
            <person name="Feldmann K.A."/>
        </authorList>
    </citation>
    <scope>NUCLEOTIDE SEQUENCE [LARGE SCALE MRNA] (ISOFORM 1)</scope>
</reference>
<reference key="6">
    <citation type="journal article" date="2007" name="Trends Plant Sci.">
        <title>Arabidopsis PPP family of serine/threonine phosphatases.</title>
        <authorList>
            <person name="Farkas I."/>
            <person name="Dombradi V."/>
            <person name="Miskei M."/>
            <person name="Szabados L."/>
            <person name="Koncz C."/>
        </authorList>
    </citation>
    <scope>GENE FAMILY</scope>
    <scope>NOMENCLATURE</scope>
</reference>
<reference key="7">
    <citation type="journal article" date="2009" name="Plant Physiol.">
        <title>Identification and functional characterization of inhibitor-3, a regulatory subunit of protein phosphatase 1 in plants.</title>
        <authorList>
            <person name="Takemiya A."/>
            <person name="Ariyoshi C."/>
            <person name="Shimazaki K."/>
        </authorList>
    </citation>
    <scope>SUBCELLULAR LOCATION</scope>
</reference>
<reference key="8">
    <citation type="journal article" date="2011" name="Biochem. J.">
        <title>Identification and characterization of AtI-2, an Arabidopsis homologue of an ancient protein phosphatase 1 (PP1) regulatory subunit.</title>
        <authorList>
            <person name="Templeton G.W."/>
            <person name="Nimick M."/>
            <person name="Morrice N."/>
            <person name="Campbell D."/>
            <person name="Goudreault M."/>
            <person name="Gingras A.C."/>
            <person name="Takemiya A."/>
            <person name="Shimazaki K."/>
            <person name="Moorhead G.B."/>
        </authorList>
    </citation>
    <scope>FUNCTION</scope>
    <scope>CATALYTIC ACTIVITY</scope>
    <scope>ACTIVITY REGULATION</scope>
</reference>
<comment type="function">
    <text evidence="3">Serine/threonine-protein phosphatase that possesses phosphatase activity toward para-nitrophenyl phosphate (pNPP) in vitro.</text>
</comment>
<comment type="catalytic activity">
    <reaction evidence="3">
        <text>O-phospho-L-seryl-[protein] + H2O = L-seryl-[protein] + phosphate</text>
        <dbReference type="Rhea" id="RHEA:20629"/>
        <dbReference type="Rhea" id="RHEA-COMP:9863"/>
        <dbReference type="Rhea" id="RHEA-COMP:11604"/>
        <dbReference type="ChEBI" id="CHEBI:15377"/>
        <dbReference type="ChEBI" id="CHEBI:29999"/>
        <dbReference type="ChEBI" id="CHEBI:43474"/>
        <dbReference type="ChEBI" id="CHEBI:83421"/>
        <dbReference type="EC" id="3.1.3.16"/>
    </reaction>
</comment>
<comment type="catalytic activity">
    <reaction evidence="3">
        <text>O-phospho-L-threonyl-[protein] + H2O = L-threonyl-[protein] + phosphate</text>
        <dbReference type="Rhea" id="RHEA:47004"/>
        <dbReference type="Rhea" id="RHEA-COMP:11060"/>
        <dbReference type="Rhea" id="RHEA-COMP:11605"/>
        <dbReference type="ChEBI" id="CHEBI:15377"/>
        <dbReference type="ChEBI" id="CHEBI:30013"/>
        <dbReference type="ChEBI" id="CHEBI:43474"/>
        <dbReference type="ChEBI" id="CHEBI:61977"/>
        <dbReference type="EC" id="3.1.3.16"/>
    </reaction>
</comment>
<comment type="cofactor">
    <cofactor evidence="1">
        <name>Mn(2+)</name>
        <dbReference type="ChEBI" id="CHEBI:29035"/>
    </cofactor>
    <text evidence="1">Binds 2 manganese ions per subunit.</text>
</comment>
<comment type="activity regulation">
    <text evidence="3">Phosphatase activity is strongly reduced by the protein phosphatase inhibitor 2 (I-2).</text>
</comment>
<comment type="subcellular location">
    <subcellularLocation>
        <location evidence="2">Nucleus</location>
    </subcellularLocation>
    <subcellularLocation>
        <location evidence="2">Cytoplasm</location>
    </subcellularLocation>
</comment>
<comment type="alternative products">
    <event type="alternative splicing"/>
    <isoform>
        <id>O82734-1</id>
        <name>1</name>
        <sequence type="displayed"/>
    </isoform>
    <isoform>
        <id>O82734-2</id>
        <name>2</name>
        <sequence type="described" ref="VSP_009007"/>
    </isoform>
</comment>
<comment type="tissue specificity">
    <text>Expressed in roots, rosettes and flowers.</text>
</comment>
<comment type="similarity">
    <text evidence="6">Belongs to the PPP phosphatase family. PP-1 subfamily.</text>
</comment>
<comment type="caution">
    <text evidence="6">It is uncertain whether Met-1, Met-2, Met-5 or Met-8 is the initiator.</text>
</comment>
<comment type="sequence caution" evidence="6">
    <conflict type="erroneous initiation">
        <sequence resource="EMBL-CDS" id="AAM65377"/>
    </conflict>
    <text>Truncated N-terminus.</text>
</comment>
<organism>
    <name type="scientific">Arabidopsis thaliana</name>
    <name type="common">Mouse-ear cress</name>
    <dbReference type="NCBI Taxonomy" id="3702"/>
    <lineage>
        <taxon>Eukaryota</taxon>
        <taxon>Viridiplantae</taxon>
        <taxon>Streptophyta</taxon>
        <taxon>Embryophyta</taxon>
        <taxon>Tracheophyta</taxon>
        <taxon>Spermatophyta</taxon>
        <taxon>Magnoliopsida</taxon>
        <taxon>eudicotyledons</taxon>
        <taxon>Gunneridae</taxon>
        <taxon>Pentapetalae</taxon>
        <taxon>rosids</taxon>
        <taxon>malvids</taxon>
        <taxon>Brassicales</taxon>
        <taxon>Brassicaceae</taxon>
        <taxon>Camelineae</taxon>
        <taxon>Arabidopsis</taxon>
    </lineage>
</organism>
<keyword id="KW-0025">Alternative splicing</keyword>
<keyword id="KW-0963">Cytoplasm</keyword>
<keyword id="KW-0378">Hydrolase</keyword>
<keyword id="KW-0464">Manganese</keyword>
<keyword id="KW-0479">Metal-binding</keyword>
<keyword id="KW-0539">Nucleus</keyword>
<keyword id="KW-0904">Protein phosphatase</keyword>
<keyword id="KW-1185">Reference proteome</keyword>
<accession>O82734</accession>
<accession>Q8LAG7</accession>
<accession>Q94B49</accession>